<protein>
    <recommendedName>
        <fullName>Defensin-like protein 1</fullName>
    </recommendedName>
    <alternativeName>
        <fullName>Cysteine-rich antifungal protein 1</fullName>
    </alternativeName>
    <alternativeName>
        <fullName>Defensin AFP1</fullName>
        <shortName>HsAFP1</shortName>
    </alternativeName>
</protein>
<comment type="function">
    <text evidence="2 3 4">Possesses antifungal activity insensitive to inorganic cations. Causes germ tubes and hyphae to swell and form multiple hyphal buds. Binds to the plasma membrane of the fungus. Has no inhibitory effect on insect gut alpha-amylase.</text>
</comment>
<comment type="subcellular location">
    <subcellularLocation>
        <location evidence="1">Secreted</location>
    </subcellularLocation>
</comment>
<comment type="similarity">
    <text evidence="5">Belongs to the DEFL family.</text>
</comment>
<evidence type="ECO:0000250" key="1"/>
<evidence type="ECO:0000269" key="2">
    <source>
    </source>
</evidence>
<evidence type="ECO:0000269" key="3">
    <source>
    </source>
</evidence>
<evidence type="ECO:0000269" key="4">
    <source>
    </source>
</evidence>
<evidence type="ECO:0000305" key="5"/>
<evidence type="ECO:0007829" key="6">
    <source>
        <dbReference type="PDB" id="2N2Q"/>
    </source>
</evidence>
<accession>P0C8Y5</accession>
<accession>Q7M1F4</accession>
<reference key="1">
    <citation type="journal article" date="1995" name="FEBS Lett.">
        <title>Isolation and characterisation of plant defensins from seeds of Asteraceae, Fabaceae, Hippocastanaceae and Saxifragaceae.</title>
        <authorList>
            <person name="Osborn R.W."/>
            <person name="De Samblanx G.W."/>
            <person name="Thevissen K."/>
            <person name="Goderis I."/>
            <person name="Torrekens S."/>
            <person name="Van Leuven F."/>
            <person name="Attenborough S."/>
            <person name="Rees S.B."/>
            <person name="Broekaert W.F."/>
        </authorList>
    </citation>
    <scope>PROTEIN SEQUENCE</scope>
    <scope>FUNCTION</scope>
    <source>
        <tissue>Seed</tissue>
    </source>
</reference>
<reference key="2">
    <citation type="journal article" date="1997" name="J. Biol. Chem.">
        <title>Specific, high affinity binding sites for an antifungal plant defensin on Neurospora crassa hyphae and microsomal membranes.</title>
        <authorList>
            <person name="Thevissen K."/>
            <person name="Osborn R.W."/>
            <person name="Acland D.P."/>
            <person name="Broekaert W.F."/>
        </authorList>
    </citation>
    <scope>FUNCTION</scope>
</reference>
<reference key="3">
    <citation type="journal article" date="1998" name="Mycopathologia">
        <title>Fungicidal and binding properties of three plant peptides.</title>
        <authorList>
            <person name="De Lucca A.J."/>
            <person name="Jacks T.J."/>
            <person name="Broekaert W.J."/>
        </authorList>
    </citation>
    <scope>FUNCTION</scope>
</reference>
<proteinExistence type="evidence at protein level"/>
<keyword id="KW-0002">3D-structure</keyword>
<keyword id="KW-0929">Antimicrobial</keyword>
<keyword id="KW-0903">Direct protein sequencing</keyword>
<keyword id="KW-1015">Disulfide bond</keyword>
<keyword id="KW-0295">Fungicide</keyword>
<keyword id="KW-0611">Plant defense</keyword>
<keyword id="KW-0964">Secreted</keyword>
<dbReference type="PIR" id="S66220">
    <property type="entry name" value="S66220"/>
</dbReference>
<dbReference type="PDB" id="2N2Q">
    <property type="method" value="NMR"/>
    <property type="chains" value="A=1-54"/>
</dbReference>
<dbReference type="PDBsum" id="2N2Q"/>
<dbReference type="SMR" id="P0C8Y5"/>
<dbReference type="EvolutionaryTrace" id="P0C8Y5"/>
<dbReference type="GO" id="GO:0005576">
    <property type="term" value="C:extracellular region"/>
    <property type="evidence" value="ECO:0007669"/>
    <property type="project" value="UniProtKB-SubCell"/>
</dbReference>
<dbReference type="GO" id="GO:0050832">
    <property type="term" value="P:defense response to fungus"/>
    <property type="evidence" value="ECO:0007669"/>
    <property type="project" value="UniProtKB-KW"/>
</dbReference>
<dbReference type="GO" id="GO:0031640">
    <property type="term" value="P:killing of cells of another organism"/>
    <property type="evidence" value="ECO:0007669"/>
    <property type="project" value="UniProtKB-KW"/>
</dbReference>
<dbReference type="Gene3D" id="3.30.30.10">
    <property type="entry name" value="Knottin, scorpion toxin-like"/>
    <property type="match status" value="1"/>
</dbReference>
<dbReference type="InterPro" id="IPR008176">
    <property type="entry name" value="Defensin_plant"/>
</dbReference>
<dbReference type="InterPro" id="IPR003614">
    <property type="entry name" value="Scorpion_toxin-like"/>
</dbReference>
<dbReference type="InterPro" id="IPR036574">
    <property type="entry name" value="Scorpion_toxin-like_sf"/>
</dbReference>
<dbReference type="Pfam" id="PF00304">
    <property type="entry name" value="Gamma-thionin"/>
    <property type="match status" value="1"/>
</dbReference>
<dbReference type="SMART" id="SM00505">
    <property type="entry name" value="Knot1"/>
    <property type="match status" value="1"/>
</dbReference>
<dbReference type="SUPFAM" id="SSF57095">
    <property type="entry name" value="Scorpion toxin-like"/>
    <property type="match status" value="1"/>
</dbReference>
<dbReference type="PROSITE" id="PS00940">
    <property type="entry name" value="GAMMA_THIONIN"/>
    <property type="match status" value="1"/>
</dbReference>
<name>DEF1_HEUSA</name>
<sequence length="54" mass="5949">DGVKLCDVPSGTWSGHCGSSSKCSQQCKDREHFAYGGACHYQFPSVKCFCKRQC</sequence>
<feature type="chain" id="PRO_0000366953" description="Defensin-like protein 1">
    <location>
        <begin position="1"/>
        <end position="54"/>
    </location>
</feature>
<feature type="disulfide bond" evidence="1">
    <location>
        <begin position="6"/>
        <end position="54"/>
    </location>
</feature>
<feature type="disulfide bond" evidence="1">
    <location>
        <begin position="17"/>
        <end position="39"/>
    </location>
</feature>
<feature type="disulfide bond" evidence="1">
    <location>
        <begin position="23"/>
        <end position="48"/>
    </location>
</feature>
<feature type="disulfide bond" evidence="1">
    <location>
        <begin position="27"/>
        <end position="50"/>
    </location>
</feature>
<feature type="strand" evidence="6">
    <location>
        <begin position="5"/>
        <end position="9"/>
    </location>
</feature>
<feature type="helix" evidence="6">
    <location>
        <begin position="20"/>
        <end position="30"/>
    </location>
</feature>
<feature type="strand" evidence="6">
    <location>
        <begin position="37"/>
        <end position="41"/>
    </location>
</feature>
<feature type="strand" evidence="6">
    <location>
        <begin position="43"/>
        <end position="53"/>
    </location>
</feature>
<organism>
    <name type="scientific">Heuchera sanguinea</name>
    <name type="common">Coralbells</name>
    <dbReference type="NCBI Taxonomy" id="43368"/>
    <lineage>
        <taxon>Eukaryota</taxon>
        <taxon>Viridiplantae</taxon>
        <taxon>Streptophyta</taxon>
        <taxon>Embryophyta</taxon>
        <taxon>Tracheophyta</taxon>
        <taxon>Spermatophyta</taxon>
        <taxon>Magnoliopsida</taxon>
        <taxon>eudicotyledons</taxon>
        <taxon>Gunneridae</taxon>
        <taxon>Pentapetalae</taxon>
        <taxon>Saxifragales</taxon>
        <taxon>Saxifragaceae</taxon>
        <taxon>Heuchereae</taxon>
        <taxon>Heuchera</taxon>
    </lineage>
</organism>